<name>MURC_METPB</name>
<keyword id="KW-0067">ATP-binding</keyword>
<keyword id="KW-0131">Cell cycle</keyword>
<keyword id="KW-0132">Cell division</keyword>
<keyword id="KW-0133">Cell shape</keyword>
<keyword id="KW-0961">Cell wall biogenesis/degradation</keyword>
<keyword id="KW-0963">Cytoplasm</keyword>
<keyword id="KW-0436">Ligase</keyword>
<keyword id="KW-0547">Nucleotide-binding</keyword>
<keyword id="KW-0573">Peptidoglycan synthesis</keyword>
<accession>B1ZGP5</accession>
<protein>
    <recommendedName>
        <fullName evidence="1">UDP-N-acetylmuramate--L-alanine ligase</fullName>
        <ecNumber evidence="1">6.3.2.8</ecNumber>
    </recommendedName>
    <alternativeName>
        <fullName evidence="1">UDP-N-acetylmuramoyl-L-alanine synthetase</fullName>
    </alternativeName>
</protein>
<organism>
    <name type="scientific">Methylorubrum populi (strain ATCC BAA-705 / NCIMB 13946 / BJ001)</name>
    <name type="common">Methylobacterium populi</name>
    <dbReference type="NCBI Taxonomy" id="441620"/>
    <lineage>
        <taxon>Bacteria</taxon>
        <taxon>Pseudomonadati</taxon>
        <taxon>Pseudomonadota</taxon>
        <taxon>Alphaproteobacteria</taxon>
        <taxon>Hyphomicrobiales</taxon>
        <taxon>Methylobacteriaceae</taxon>
        <taxon>Methylorubrum</taxon>
    </lineage>
</organism>
<dbReference type="EC" id="6.3.2.8" evidence="1"/>
<dbReference type="EMBL" id="CP001029">
    <property type="protein sequence ID" value="ACB81278.1"/>
    <property type="molecule type" value="Genomic_DNA"/>
</dbReference>
<dbReference type="RefSeq" id="WP_012454996.1">
    <property type="nucleotide sequence ID" value="NC_010725.1"/>
</dbReference>
<dbReference type="SMR" id="B1ZGP5"/>
<dbReference type="STRING" id="441620.Mpop_3125"/>
<dbReference type="KEGG" id="mpo:Mpop_3125"/>
<dbReference type="eggNOG" id="COG0773">
    <property type="taxonomic scope" value="Bacteria"/>
</dbReference>
<dbReference type="HOGENOM" id="CLU_028104_2_2_5"/>
<dbReference type="OrthoDB" id="9804126at2"/>
<dbReference type="UniPathway" id="UPA00219"/>
<dbReference type="Proteomes" id="UP000007136">
    <property type="component" value="Chromosome"/>
</dbReference>
<dbReference type="GO" id="GO:0005737">
    <property type="term" value="C:cytoplasm"/>
    <property type="evidence" value="ECO:0007669"/>
    <property type="project" value="UniProtKB-SubCell"/>
</dbReference>
<dbReference type="GO" id="GO:0005524">
    <property type="term" value="F:ATP binding"/>
    <property type="evidence" value="ECO:0007669"/>
    <property type="project" value="UniProtKB-UniRule"/>
</dbReference>
<dbReference type="GO" id="GO:0008763">
    <property type="term" value="F:UDP-N-acetylmuramate-L-alanine ligase activity"/>
    <property type="evidence" value="ECO:0007669"/>
    <property type="project" value="UniProtKB-UniRule"/>
</dbReference>
<dbReference type="GO" id="GO:0051301">
    <property type="term" value="P:cell division"/>
    <property type="evidence" value="ECO:0007669"/>
    <property type="project" value="UniProtKB-KW"/>
</dbReference>
<dbReference type="GO" id="GO:0071555">
    <property type="term" value="P:cell wall organization"/>
    <property type="evidence" value="ECO:0007669"/>
    <property type="project" value="UniProtKB-KW"/>
</dbReference>
<dbReference type="GO" id="GO:0009252">
    <property type="term" value="P:peptidoglycan biosynthetic process"/>
    <property type="evidence" value="ECO:0007669"/>
    <property type="project" value="UniProtKB-UniRule"/>
</dbReference>
<dbReference type="GO" id="GO:0008360">
    <property type="term" value="P:regulation of cell shape"/>
    <property type="evidence" value="ECO:0007669"/>
    <property type="project" value="UniProtKB-KW"/>
</dbReference>
<dbReference type="Gene3D" id="3.90.190.20">
    <property type="entry name" value="Mur ligase, C-terminal domain"/>
    <property type="match status" value="1"/>
</dbReference>
<dbReference type="Gene3D" id="3.40.1190.10">
    <property type="entry name" value="Mur-like, catalytic domain"/>
    <property type="match status" value="1"/>
</dbReference>
<dbReference type="Gene3D" id="3.40.50.720">
    <property type="entry name" value="NAD(P)-binding Rossmann-like Domain"/>
    <property type="match status" value="1"/>
</dbReference>
<dbReference type="HAMAP" id="MF_00046">
    <property type="entry name" value="MurC"/>
    <property type="match status" value="1"/>
</dbReference>
<dbReference type="InterPro" id="IPR036565">
    <property type="entry name" value="Mur-like_cat_sf"/>
</dbReference>
<dbReference type="InterPro" id="IPR004101">
    <property type="entry name" value="Mur_ligase_C"/>
</dbReference>
<dbReference type="InterPro" id="IPR036615">
    <property type="entry name" value="Mur_ligase_C_dom_sf"/>
</dbReference>
<dbReference type="InterPro" id="IPR013221">
    <property type="entry name" value="Mur_ligase_cen"/>
</dbReference>
<dbReference type="InterPro" id="IPR000713">
    <property type="entry name" value="Mur_ligase_N"/>
</dbReference>
<dbReference type="InterPro" id="IPR050061">
    <property type="entry name" value="MurCDEF_pg_biosynth"/>
</dbReference>
<dbReference type="InterPro" id="IPR005758">
    <property type="entry name" value="UDP-N-AcMur_Ala_ligase_MurC"/>
</dbReference>
<dbReference type="NCBIfam" id="TIGR01082">
    <property type="entry name" value="murC"/>
    <property type="match status" value="1"/>
</dbReference>
<dbReference type="PANTHER" id="PTHR43445:SF3">
    <property type="entry name" value="UDP-N-ACETYLMURAMATE--L-ALANINE LIGASE"/>
    <property type="match status" value="1"/>
</dbReference>
<dbReference type="PANTHER" id="PTHR43445">
    <property type="entry name" value="UDP-N-ACETYLMURAMATE--L-ALANINE LIGASE-RELATED"/>
    <property type="match status" value="1"/>
</dbReference>
<dbReference type="Pfam" id="PF01225">
    <property type="entry name" value="Mur_ligase"/>
    <property type="match status" value="1"/>
</dbReference>
<dbReference type="Pfam" id="PF02875">
    <property type="entry name" value="Mur_ligase_C"/>
    <property type="match status" value="1"/>
</dbReference>
<dbReference type="Pfam" id="PF08245">
    <property type="entry name" value="Mur_ligase_M"/>
    <property type="match status" value="1"/>
</dbReference>
<dbReference type="SUPFAM" id="SSF51984">
    <property type="entry name" value="MurCD N-terminal domain"/>
    <property type="match status" value="1"/>
</dbReference>
<dbReference type="SUPFAM" id="SSF53623">
    <property type="entry name" value="MurD-like peptide ligases, catalytic domain"/>
    <property type="match status" value="1"/>
</dbReference>
<dbReference type="SUPFAM" id="SSF53244">
    <property type="entry name" value="MurD-like peptide ligases, peptide-binding domain"/>
    <property type="match status" value="1"/>
</dbReference>
<evidence type="ECO:0000255" key="1">
    <source>
        <dbReference type="HAMAP-Rule" id="MF_00046"/>
    </source>
</evidence>
<feature type="chain" id="PRO_1000091115" description="UDP-N-acetylmuramate--L-alanine ligase">
    <location>
        <begin position="1"/>
        <end position="468"/>
    </location>
</feature>
<feature type="binding site" evidence="1">
    <location>
        <begin position="114"/>
        <end position="120"/>
    </location>
    <ligand>
        <name>ATP</name>
        <dbReference type="ChEBI" id="CHEBI:30616"/>
    </ligand>
</feature>
<sequence length="468" mass="50808">MKLPEKLGPIHFIGIGGIGMSGIAEVMANLGYTVQGSDANDNANVRRLSENGIRTFVGHRAENVENAALVVVSTAIRRDNPELIEARERRLPVVRRAEMLAELMRFKSCVAVAGTHGKTTTTSLVATLLDAGNLDPTVINGGIINAYGTNARMGAGDWMVVEADESDGTFLKLPADVAIVTNIDPEHLDHFGSFDAIKDAFRRFIDNIPFYGFAVMCIDHPIVQDLVGHIEDRRIITYGENPQADVRLIDIDLKGGQSRFRVMIRDRRPGFRLEMQDLVLPMPGRHNALNATAALAVAHELGVSEDAIRKALAGFGGVKRRFTRTGEWNGAAIFDDYGHHPVEIAAVLRAARSSTDGKVIAVVQPHRYTRLQSLFEDFCTCFNDADTVIVAPVYAAGEAPIEGIDRDSLIAGLKARGHRDAVALERPEDLARLVSGRAEPNDYVVCLGAGTITQWAYALPGELAALKG</sequence>
<comment type="function">
    <text evidence="1">Cell wall formation.</text>
</comment>
<comment type="catalytic activity">
    <reaction evidence="1">
        <text>UDP-N-acetyl-alpha-D-muramate + L-alanine + ATP = UDP-N-acetyl-alpha-D-muramoyl-L-alanine + ADP + phosphate + H(+)</text>
        <dbReference type="Rhea" id="RHEA:23372"/>
        <dbReference type="ChEBI" id="CHEBI:15378"/>
        <dbReference type="ChEBI" id="CHEBI:30616"/>
        <dbReference type="ChEBI" id="CHEBI:43474"/>
        <dbReference type="ChEBI" id="CHEBI:57972"/>
        <dbReference type="ChEBI" id="CHEBI:70757"/>
        <dbReference type="ChEBI" id="CHEBI:83898"/>
        <dbReference type="ChEBI" id="CHEBI:456216"/>
        <dbReference type="EC" id="6.3.2.8"/>
    </reaction>
</comment>
<comment type="pathway">
    <text evidence="1">Cell wall biogenesis; peptidoglycan biosynthesis.</text>
</comment>
<comment type="subcellular location">
    <subcellularLocation>
        <location evidence="1">Cytoplasm</location>
    </subcellularLocation>
</comment>
<comment type="similarity">
    <text evidence="1">Belongs to the MurCDEF family.</text>
</comment>
<reference key="1">
    <citation type="submission" date="2008-04" db="EMBL/GenBank/DDBJ databases">
        <title>Complete sequence of chromosome of Methylobacterium populi BJ001.</title>
        <authorList>
            <consortium name="US DOE Joint Genome Institute"/>
            <person name="Copeland A."/>
            <person name="Lucas S."/>
            <person name="Lapidus A."/>
            <person name="Glavina del Rio T."/>
            <person name="Dalin E."/>
            <person name="Tice H."/>
            <person name="Bruce D."/>
            <person name="Goodwin L."/>
            <person name="Pitluck S."/>
            <person name="Chertkov O."/>
            <person name="Brettin T."/>
            <person name="Detter J.C."/>
            <person name="Han C."/>
            <person name="Kuske C.R."/>
            <person name="Schmutz J."/>
            <person name="Larimer F."/>
            <person name="Land M."/>
            <person name="Hauser L."/>
            <person name="Kyrpides N."/>
            <person name="Mikhailova N."/>
            <person name="Marx C."/>
            <person name="Richardson P."/>
        </authorList>
    </citation>
    <scope>NUCLEOTIDE SEQUENCE [LARGE SCALE GENOMIC DNA]</scope>
    <source>
        <strain>ATCC BAA-705 / NCIMB 13946 / BJ001</strain>
    </source>
</reference>
<gene>
    <name evidence="1" type="primary">murC</name>
    <name type="ordered locus">Mpop_3125</name>
</gene>
<proteinExistence type="inferred from homology"/>